<comment type="function">
    <text evidence="1">Endonuclease that specifically degrades the RNA of RNA-DNA hybrids.</text>
</comment>
<comment type="catalytic activity">
    <reaction evidence="1">
        <text>Endonucleolytic cleavage to 5'-phosphomonoester.</text>
        <dbReference type="EC" id="3.1.26.4"/>
    </reaction>
</comment>
<comment type="cofactor">
    <cofactor evidence="1">
        <name>Mn(2+)</name>
        <dbReference type="ChEBI" id="CHEBI:29035"/>
    </cofactor>
    <cofactor evidence="1">
        <name>Mg(2+)</name>
        <dbReference type="ChEBI" id="CHEBI:18420"/>
    </cofactor>
    <text evidence="1">Manganese or magnesium. Binds 1 divalent metal ion per monomer in the absence of substrate. May bind a second metal ion after substrate binding.</text>
</comment>
<comment type="subcellular location">
    <subcellularLocation>
        <location evidence="1">Cytoplasm</location>
    </subcellularLocation>
</comment>
<comment type="similarity">
    <text evidence="1">Belongs to the RNase HII family.</text>
</comment>
<organism>
    <name type="scientific">Edwardsiella ictaluri (strain 93-146)</name>
    <dbReference type="NCBI Taxonomy" id="634503"/>
    <lineage>
        <taxon>Bacteria</taxon>
        <taxon>Pseudomonadati</taxon>
        <taxon>Pseudomonadota</taxon>
        <taxon>Gammaproteobacteria</taxon>
        <taxon>Enterobacterales</taxon>
        <taxon>Hafniaceae</taxon>
        <taxon>Edwardsiella</taxon>
    </lineage>
</organism>
<keyword id="KW-0963">Cytoplasm</keyword>
<keyword id="KW-0255">Endonuclease</keyword>
<keyword id="KW-0378">Hydrolase</keyword>
<keyword id="KW-0464">Manganese</keyword>
<keyword id="KW-0479">Metal-binding</keyword>
<keyword id="KW-0540">Nuclease</keyword>
<reference key="1">
    <citation type="submission" date="2009-03" db="EMBL/GenBank/DDBJ databases">
        <title>Complete genome sequence of Edwardsiella ictaluri 93-146.</title>
        <authorList>
            <person name="Williams M.L."/>
            <person name="Gillaspy A.F."/>
            <person name="Dyer D.W."/>
            <person name="Thune R.L."/>
            <person name="Waldbieser G.C."/>
            <person name="Schuster S.C."/>
            <person name="Gipson J."/>
            <person name="Zaitshik J."/>
            <person name="Landry C."/>
            <person name="Lawrence M.L."/>
        </authorList>
    </citation>
    <scope>NUCLEOTIDE SEQUENCE [LARGE SCALE GENOMIC DNA]</scope>
    <source>
        <strain>93-146</strain>
    </source>
</reference>
<proteinExistence type="inferred from homology"/>
<feature type="chain" id="PRO_1000202283" description="Ribonuclease HII">
    <location>
        <begin position="1"/>
        <end position="197"/>
    </location>
</feature>
<feature type="domain" description="RNase H type-2" evidence="2">
    <location>
        <begin position="11"/>
        <end position="197"/>
    </location>
</feature>
<feature type="binding site" evidence="1">
    <location>
        <position position="17"/>
    </location>
    <ligand>
        <name>a divalent metal cation</name>
        <dbReference type="ChEBI" id="CHEBI:60240"/>
    </ligand>
</feature>
<feature type="binding site" evidence="1">
    <location>
        <position position="18"/>
    </location>
    <ligand>
        <name>a divalent metal cation</name>
        <dbReference type="ChEBI" id="CHEBI:60240"/>
    </ligand>
</feature>
<feature type="binding site" evidence="1">
    <location>
        <position position="109"/>
    </location>
    <ligand>
        <name>a divalent metal cation</name>
        <dbReference type="ChEBI" id="CHEBI:60240"/>
    </ligand>
</feature>
<gene>
    <name evidence="1" type="primary">rnhB</name>
    <name type="ordered locus">NT01EI_0853</name>
</gene>
<sequence>MSDIFVYPCAGRIAGVDEVGRGPLVGAVVTAAVILDPARPIAGLADSKKLSEKRRNALYDEIVEKALCWSLGRAEAEEIDRLNILQATMVAMQRAVAGLARQPDFVLIDGNRCPALPMAAQAVVKGDSRVAEISAASILAKVTRDREMAALDRQYPEYGFARHKGYPTALHLERLAALGATEHHRRSFGPVKRVLGL</sequence>
<accession>C5B7S2</accession>
<dbReference type="EC" id="3.1.26.4" evidence="1"/>
<dbReference type="EMBL" id="CP001600">
    <property type="protein sequence ID" value="ACR68068.1"/>
    <property type="molecule type" value="Genomic_DNA"/>
</dbReference>
<dbReference type="RefSeq" id="WP_015870259.1">
    <property type="nucleotide sequence ID" value="NZ_CP169062.1"/>
</dbReference>
<dbReference type="SMR" id="C5B7S2"/>
<dbReference type="STRING" id="67780.B6E78_14845"/>
<dbReference type="GeneID" id="69537906"/>
<dbReference type="KEGG" id="eic:NT01EI_0853"/>
<dbReference type="PATRIC" id="fig|634503.3.peg.771"/>
<dbReference type="HOGENOM" id="CLU_036532_3_2_6"/>
<dbReference type="OrthoDB" id="9803420at2"/>
<dbReference type="Proteomes" id="UP000001485">
    <property type="component" value="Chromosome"/>
</dbReference>
<dbReference type="GO" id="GO:0005737">
    <property type="term" value="C:cytoplasm"/>
    <property type="evidence" value="ECO:0007669"/>
    <property type="project" value="UniProtKB-SubCell"/>
</dbReference>
<dbReference type="GO" id="GO:0032299">
    <property type="term" value="C:ribonuclease H2 complex"/>
    <property type="evidence" value="ECO:0007669"/>
    <property type="project" value="TreeGrafter"/>
</dbReference>
<dbReference type="GO" id="GO:0030145">
    <property type="term" value="F:manganese ion binding"/>
    <property type="evidence" value="ECO:0007669"/>
    <property type="project" value="UniProtKB-UniRule"/>
</dbReference>
<dbReference type="GO" id="GO:0003723">
    <property type="term" value="F:RNA binding"/>
    <property type="evidence" value="ECO:0007669"/>
    <property type="project" value="InterPro"/>
</dbReference>
<dbReference type="GO" id="GO:0004523">
    <property type="term" value="F:RNA-DNA hybrid ribonuclease activity"/>
    <property type="evidence" value="ECO:0007669"/>
    <property type="project" value="UniProtKB-UniRule"/>
</dbReference>
<dbReference type="GO" id="GO:0043137">
    <property type="term" value="P:DNA replication, removal of RNA primer"/>
    <property type="evidence" value="ECO:0007669"/>
    <property type="project" value="TreeGrafter"/>
</dbReference>
<dbReference type="GO" id="GO:0006298">
    <property type="term" value="P:mismatch repair"/>
    <property type="evidence" value="ECO:0007669"/>
    <property type="project" value="TreeGrafter"/>
</dbReference>
<dbReference type="CDD" id="cd07182">
    <property type="entry name" value="RNase_HII_bacteria_HII_like"/>
    <property type="match status" value="1"/>
</dbReference>
<dbReference type="FunFam" id="3.30.420.10:FF:000006">
    <property type="entry name" value="Ribonuclease HII"/>
    <property type="match status" value="1"/>
</dbReference>
<dbReference type="Gene3D" id="3.30.420.10">
    <property type="entry name" value="Ribonuclease H-like superfamily/Ribonuclease H"/>
    <property type="match status" value="1"/>
</dbReference>
<dbReference type="HAMAP" id="MF_00052_B">
    <property type="entry name" value="RNase_HII_B"/>
    <property type="match status" value="1"/>
</dbReference>
<dbReference type="InterPro" id="IPR022898">
    <property type="entry name" value="RNase_HII"/>
</dbReference>
<dbReference type="InterPro" id="IPR001352">
    <property type="entry name" value="RNase_HII/HIII"/>
</dbReference>
<dbReference type="InterPro" id="IPR024567">
    <property type="entry name" value="RNase_HII/HIII_dom"/>
</dbReference>
<dbReference type="InterPro" id="IPR012337">
    <property type="entry name" value="RNaseH-like_sf"/>
</dbReference>
<dbReference type="InterPro" id="IPR036397">
    <property type="entry name" value="RNaseH_sf"/>
</dbReference>
<dbReference type="NCBIfam" id="NF000594">
    <property type="entry name" value="PRK00015.1-1"/>
    <property type="match status" value="1"/>
</dbReference>
<dbReference type="NCBIfam" id="NF000595">
    <property type="entry name" value="PRK00015.1-3"/>
    <property type="match status" value="1"/>
</dbReference>
<dbReference type="NCBIfam" id="NF000596">
    <property type="entry name" value="PRK00015.1-4"/>
    <property type="match status" value="1"/>
</dbReference>
<dbReference type="PANTHER" id="PTHR10954">
    <property type="entry name" value="RIBONUCLEASE H2 SUBUNIT A"/>
    <property type="match status" value="1"/>
</dbReference>
<dbReference type="PANTHER" id="PTHR10954:SF18">
    <property type="entry name" value="RIBONUCLEASE HII"/>
    <property type="match status" value="1"/>
</dbReference>
<dbReference type="Pfam" id="PF01351">
    <property type="entry name" value="RNase_HII"/>
    <property type="match status" value="1"/>
</dbReference>
<dbReference type="SUPFAM" id="SSF53098">
    <property type="entry name" value="Ribonuclease H-like"/>
    <property type="match status" value="1"/>
</dbReference>
<dbReference type="PROSITE" id="PS51975">
    <property type="entry name" value="RNASE_H_2"/>
    <property type="match status" value="1"/>
</dbReference>
<protein>
    <recommendedName>
        <fullName evidence="1">Ribonuclease HII</fullName>
        <shortName evidence="1">RNase HII</shortName>
        <ecNumber evidence="1">3.1.26.4</ecNumber>
    </recommendedName>
</protein>
<evidence type="ECO:0000255" key="1">
    <source>
        <dbReference type="HAMAP-Rule" id="MF_00052"/>
    </source>
</evidence>
<evidence type="ECO:0000255" key="2">
    <source>
        <dbReference type="PROSITE-ProRule" id="PRU01319"/>
    </source>
</evidence>
<name>RNH2_EDWI9</name>